<proteinExistence type="evidence at transcript level"/>
<evidence type="ECO:0000250" key="1">
    <source>
        <dbReference type="UniProtKB" id="Q9FNM7"/>
    </source>
</evidence>
<evidence type="ECO:0000255" key="2">
    <source>
        <dbReference type="PROSITE-ProRule" id="PRU00541"/>
    </source>
</evidence>
<evidence type="ECO:0000255" key="3">
    <source>
        <dbReference type="PROSITE-ProRule" id="PRU00542"/>
    </source>
</evidence>
<evidence type="ECO:0000256" key="4">
    <source>
        <dbReference type="SAM" id="MobiDB-lite"/>
    </source>
</evidence>
<evidence type="ECO:0000305" key="5"/>
<gene>
    <name type="primary">RH25</name>
    <name type="ordered locus">At5g08620</name>
    <name type="ORF">MAH20.18</name>
</gene>
<feature type="chain" id="PRO_0000239165" description="DEAD-box ATP-dependent RNA helicase 25">
    <location>
        <begin position="1"/>
        <end position="563"/>
    </location>
</feature>
<feature type="domain" description="Helicase ATP-binding" evidence="2">
    <location>
        <begin position="111"/>
        <end position="294"/>
    </location>
</feature>
<feature type="domain" description="Helicase C-terminal" evidence="3">
    <location>
        <begin position="328"/>
        <end position="479"/>
    </location>
</feature>
<feature type="region of interest" description="Disordered" evidence="4">
    <location>
        <begin position="21"/>
        <end position="57"/>
    </location>
</feature>
<feature type="short sequence motif" description="Q motif">
    <location>
        <begin position="80"/>
        <end position="108"/>
    </location>
</feature>
<feature type="short sequence motif" description="DEAD box">
    <location>
        <begin position="242"/>
        <end position="245"/>
    </location>
</feature>
<feature type="compositionally biased region" description="Basic and acidic residues" evidence="4">
    <location>
        <begin position="23"/>
        <end position="56"/>
    </location>
</feature>
<feature type="binding site" evidence="2">
    <location>
        <begin position="124"/>
        <end position="131"/>
    </location>
    <ligand>
        <name>ATP</name>
        <dbReference type="ChEBI" id="CHEBI:30616"/>
    </ligand>
</feature>
<feature type="modified residue" description="Phosphoserine" evidence="1">
    <location>
        <position position="25"/>
    </location>
</feature>
<feature type="sequence conflict" description="In Ref. 4; AAK59619." evidence="5" ref="4">
    <original>D</original>
    <variation>N</variation>
    <location>
        <position position="119"/>
    </location>
</feature>
<organism>
    <name type="scientific">Arabidopsis thaliana</name>
    <name type="common">Mouse-ear cress</name>
    <dbReference type="NCBI Taxonomy" id="3702"/>
    <lineage>
        <taxon>Eukaryota</taxon>
        <taxon>Viridiplantae</taxon>
        <taxon>Streptophyta</taxon>
        <taxon>Embryophyta</taxon>
        <taxon>Tracheophyta</taxon>
        <taxon>Spermatophyta</taxon>
        <taxon>Magnoliopsida</taxon>
        <taxon>eudicotyledons</taxon>
        <taxon>Gunneridae</taxon>
        <taxon>Pentapetalae</taxon>
        <taxon>rosids</taxon>
        <taxon>malvids</taxon>
        <taxon>Brassicales</taxon>
        <taxon>Brassicaceae</taxon>
        <taxon>Camelineae</taxon>
        <taxon>Arabidopsis</taxon>
    </lineage>
</organism>
<dbReference type="EC" id="3.6.4.13"/>
<dbReference type="EMBL" id="AJ010473">
    <property type="protein sequence ID" value="CAA09212.1"/>
    <property type="molecule type" value="mRNA"/>
</dbReference>
<dbReference type="EMBL" id="AB006697">
    <property type="protein sequence ID" value="BAB10011.1"/>
    <property type="molecule type" value="Genomic_DNA"/>
</dbReference>
<dbReference type="EMBL" id="CP002688">
    <property type="protein sequence ID" value="AED91330.1"/>
    <property type="molecule type" value="Genomic_DNA"/>
</dbReference>
<dbReference type="EMBL" id="AY035114">
    <property type="protein sequence ID" value="AAK59619.1"/>
    <property type="molecule type" value="mRNA"/>
</dbReference>
<dbReference type="EMBL" id="AY142638">
    <property type="protein sequence ID" value="AAN13096.1"/>
    <property type="molecule type" value="mRNA"/>
</dbReference>
<dbReference type="PIR" id="T51348">
    <property type="entry name" value="T51348"/>
</dbReference>
<dbReference type="RefSeq" id="NP_196479.1">
    <property type="nucleotide sequence ID" value="NM_120949.4"/>
</dbReference>
<dbReference type="SMR" id="Q94C75"/>
<dbReference type="BioGRID" id="16041">
    <property type="interactions" value="6"/>
</dbReference>
<dbReference type="FunCoup" id="Q94C75">
    <property type="interactions" value="716"/>
</dbReference>
<dbReference type="STRING" id="3702.Q94C75"/>
<dbReference type="PaxDb" id="3702-AT5G08620.1"/>
<dbReference type="ProteomicsDB" id="236964"/>
<dbReference type="EnsemblPlants" id="AT5G08620.1">
    <property type="protein sequence ID" value="AT5G08620.1"/>
    <property type="gene ID" value="AT5G08620"/>
</dbReference>
<dbReference type="GeneID" id="830763"/>
<dbReference type="Gramene" id="AT5G08620.1">
    <property type="protein sequence ID" value="AT5G08620.1"/>
    <property type="gene ID" value="AT5G08620"/>
</dbReference>
<dbReference type="KEGG" id="ath:AT5G08620"/>
<dbReference type="Araport" id="AT5G08620"/>
<dbReference type="TAIR" id="AT5G08620">
    <property type="gene designation" value="STRS2"/>
</dbReference>
<dbReference type="eggNOG" id="KOG0342">
    <property type="taxonomic scope" value="Eukaryota"/>
</dbReference>
<dbReference type="HOGENOM" id="CLU_003041_26_6_1"/>
<dbReference type="InParanoid" id="Q94C75"/>
<dbReference type="OMA" id="AYKVMLF"/>
<dbReference type="OrthoDB" id="193716at2759"/>
<dbReference type="PhylomeDB" id="Q94C75"/>
<dbReference type="CD-CODE" id="4299E36E">
    <property type="entry name" value="Nucleolus"/>
</dbReference>
<dbReference type="PRO" id="PR:Q94C75"/>
<dbReference type="Proteomes" id="UP000006548">
    <property type="component" value="Chromosome 5"/>
</dbReference>
<dbReference type="ExpressionAtlas" id="Q94C75">
    <property type="expression patterns" value="baseline and differential"/>
</dbReference>
<dbReference type="GO" id="GO:0005524">
    <property type="term" value="F:ATP binding"/>
    <property type="evidence" value="ECO:0007669"/>
    <property type="project" value="UniProtKB-KW"/>
</dbReference>
<dbReference type="GO" id="GO:0016887">
    <property type="term" value="F:ATP hydrolysis activity"/>
    <property type="evidence" value="ECO:0007669"/>
    <property type="project" value="RHEA"/>
</dbReference>
<dbReference type="GO" id="GO:0003723">
    <property type="term" value="F:RNA binding"/>
    <property type="evidence" value="ECO:0000314"/>
    <property type="project" value="TAIR"/>
</dbReference>
<dbReference type="GO" id="GO:0003724">
    <property type="term" value="F:RNA helicase activity"/>
    <property type="evidence" value="ECO:0007669"/>
    <property type="project" value="UniProtKB-EC"/>
</dbReference>
<dbReference type="GO" id="GO:0009409">
    <property type="term" value="P:response to cold"/>
    <property type="evidence" value="ECO:0000270"/>
    <property type="project" value="TAIR"/>
</dbReference>
<dbReference type="GO" id="GO:0009651">
    <property type="term" value="P:response to salt stress"/>
    <property type="evidence" value="ECO:0000315"/>
    <property type="project" value="TAIR"/>
</dbReference>
<dbReference type="GO" id="GO:0009414">
    <property type="term" value="P:response to water deprivation"/>
    <property type="evidence" value="ECO:0000315"/>
    <property type="project" value="TAIR"/>
</dbReference>
<dbReference type="CDD" id="cd17964">
    <property type="entry name" value="DEADc_MSS116"/>
    <property type="match status" value="1"/>
</dbReference>
<dbReference type="CDD" id="cd18787">
    <property type="entry name" value="SF2_C_DEAD"/>
    <property type="match status" value="1"/>
</dbReference>
<dbReference type="FunFam" id="3.40.50.300:FF:002640">
    <property type="entry name" value="DEAD-box ATP-dependent RNA helicase 25"/>
    <property type="match status" value="1"/>
</dbReference>
<dbReference type="FunFam" id="3.40.50.300:FF:002327">
    <property type="entry name" value="DEAD-box ATP-dependent RNA helicase 26"/>
    <property type="match status" value="1"/>
</dbReference>
<dbReference type="Gene3D" id="3.40.50.300">
    <property type="entry name" value="P-loop containing nucleotide triphosphate hydrolases"/>
    <property type="match status" value="2"/>
</dbReference>
<dbReference type="InterPro" id="IPR011545">
    <property type="entry name" value="DEAD/DEAH_box_helicase_dom"/>
</dbReference>
<dbReference type="InterPro" id="IPR014001">
    <property type="entry name" value="Helicase_ATP-bd"/>
</dbReference>
<dbReference type="InterPro" id="IPR001650">
    <property type="entry name" value="Helicase_C-like"/>
</dbReference>
<dbReference type="InterPro" id="IPR027417">
    <property type="entry name" value="P-loop_NTPase"/>
</dbReference>
<dbReference type="InterPro" id="IPR014014">
    <property type="entry name" value="RNA_helicase_DEAD_Q_motif"/>
</dbReference>
<dbReference type="PANTHER" id="PTHR24031">
    <property type="entry name" value="RNA HELICASE"/>
    <property type="match status" value="1"/>
</dbReference>
<dbReference type="Pfam" id="PF00270">
    <property type="entry name" value="DEAD"/>
    <property type="match status" value="1"/>
</dbReference>
<dbReference type="Pfam" id="PF00271">
    <property type="entry name" value="Helicase_C"/>
    <property type="match status" value="1"/>
</dbReference>
<dbReference type="SMART" id="SM00487">
    <property type="entry name" value="DEXDc"/>
    <property type="match status" value="1"/>
</dbReference>
<dbReference type="SMART" id="SM00490">
    <property type="entry name" value="HELICc"/>
    <property type="match status" value="1"/>
</dbReference>
<dbReference type="SUPFAM" id="SSF52540">
    <property type="entry name" value="P-loop containing nucleoside triphosphate hydrolases"/>
    <property type="match status" value="1"/>
</dbReference>
<dbReference type="PROSITE" id="PS51192">
    <property type="entry name" value="HELICASE_ATP_BIND_1"/>
    <property type="match status" value="1"/>
</dbReference>
<dbReference type="PROSITE" id="PS51194">
    <property type="entry name" value="HELICASE_CTER"/>
    <property type="match status" value="1"/>
</dbReference>
<dbReference type="PROSITE" id="PS51195">
    <property type="entry name" value="Q_MOTIF"/>
    <property type="match status" value="1"/>
</dbReference>
<reference key="1">
    <citation type="journal article" date="1999" name="Nucleic Acids Res.">
        <title>The DEAD box RNA helicase family in Arabidopsis thaliana.</title>
        <authorList>
            <person name="Aubourg S."/>
            <person name="Kreis M."/>
            <person name="Lecharny A."/>
        </authorList>
    </citation>
    <scope>NUCLEOTIDE SEQUENCE [MRNA]</scope>
    <source>
        <strain>cv. Columbia</strain>
    </source>
</reference>
<reference key="2">
    <citation type="journal article" date="1997" name="DNA Res.">
        <title>Structural analysis of Arabidopsis thaliana chromosome 5. II. Sequence features of the regions of 1,044,062 bp covered by thirteen physically assigned P1 clones.</title>
        <authorList>
            <person name="Kotani H."/>
            <person name="Nakamura Y."/>
            <person name="Sato S."/>
            <person name="Kaneko T."/>
            <person name="Asamizu E."/>
            <person name="Miyajima N."/>
            <person name="Tabata S."/>
        </authorList>
    </citation>
    <scope>NUCLEOTIDE SEQUENCE [LARGE SCALE GENOMIC DNA]</scope>
    <source>
        <strain>cv. Columbia</strain>
    </source>
</reference>
<reference key="3">
    <citation type="journal article" date="2017" name="Plant J.">
        <title>Araport11: a complete reannotation of the Arabidopsis thaliana reference genome.</title>
        <authorList>
            <person name="Cheng C.Y."/>
            <person name="Krishnakumar V."/>
            <person name="Chan A.P."/>
            <person name="Thibaud-Nissen F."/>
            <person name="Schobel S."/>
            <person name="Town C.D."/>
        </authorList>
    </citation>
    <scope>GENOME REANNOTATION</scope>
    <source>
        <strain>cv. Columbia</strain>
    </source>
</reference>
<reference key="4">
    <citation type="journal article" date="2003" name="Science">
        <title>Empirical analysis of transcriptional activity in the Arabidopsis genome.</title>
        <authorList>
            <person name="Yamada K."/>
            <person name="Lim J."/>
            <person name="Dale J.M."/>
            <person name="Chen H."/>
            <person name="Shinn P."/>
            <person name="Palm C.J."/>
            <person name="Southwick A.M."/>
            <person name="Wu H.C."/>
            <person name="Kim C.J."/>
            <person name="Nguyen M."/>
            <person name="Pham P.K."/>
            <person name="Cheuk R.F."/>
            <person name="Karlin-Newmann G."/>
            <person name="Liu S.X."/>
            <person name="Lam B."/>
            <person name="Sakano H."/>
            <person name="Wu T."/>
            <person name="Yu G."/>
            <person name="Miranda M."/>
            <person name="Quach H.L."/>
            <person name="Tripp M."/>
            <person name="Chang C.H."/>
            <person name="Lee J.M."/>
            <person name="Toriumi M.J."/>
            <person name="Chan M.M."/>
            <person name="Tang C.C."/>
            <person name="Onodera C.S."/>
            <person name="Deng J.M."/>
            <person name="Akiyama K."/>
            <person name="Ansari Y."/>
            <person name="Arakawa T."/>
            <person name="Banh J."/>
            <person name="Banno F."/>
            <person name="Bowser L."/>
            <person name="Brooks S.Y."/>
            <person name="Carninci P."/>
            <person name="Chao Q."/>
            <person name="Choy N."/>
            <person name="Enju A."/>
            <person name="Goldsmith A.D."/>
            <person name="Gurjal M."/>
            <person name="Hansen N.F."/>
            <person name="Hayashizaki Y."/>
            <person name="Johnson-Hopson C."/>
            <person name="Hsuan V.W."/>
            <person name="Iida K."/>
            <person name="Karnes M."/>
            <person name="Khan S."/>
            <person name="Koesema E."/>
            <person name="Ishida J."/>
            <person name="Jiang P.X."/>
            <person name="Jones T."/>
            <person name="Kawai J."/>
            <person name="Kamiya A."/>
            <person name="Meyers C."/>
            <person name="Nakajima M."/>
            <person name="Narusaka M."/>
            <person name="Seki M."/>
            <person name="Sakurai T."/>
            <person name="Satou M."/>
            <person name="Tamse R."/>
            <person name="Vaysberg M."/>
            <person name="Wallender E.K."/>
            <person name="Wong C."/>
            <person name="Yamamura Y."/>
            <person name="Yuan S."/>
            <person name="Shinozaki K."/>
            <person name="Davis R.W."/>
            <person name="Theologis A."/>
            <person name="Ecker J.R."/>
        </authorList>
    </citation>
    <scope>NUCLEOTIDE SEQUENCE [LARGE SCALE MRNA]</scope>
    <source>
        <strain>cv. Columbia</strain>
    </source>
</reference>
<reference key="5">
    <citation type="journal article" date="2004" name="Plant Biotechnol. J.">
        <title>DEAD-box RNA helicases in Arabidopsis thaliana: establishing a link between quantitative expression, gene structure and evolution of a family of genes.</title>
        <authorList>
            <person name="Mingam A."/>
            <person name="Toffano-Nioche C."/>
            <person name="Brunaud V."/>
            <person name="Boudet N."/>
            <person name="Kreis M."/>
            <person name="Lecharny A."/>
        </authorList>
    </citation>
    <scope>GENE FAMILY</scope>
    <scope>NOMENCLATURE</scope>
</reference>
<reference key="6">
    <citation type="journal article" date="2013" name="PLoS ONE">
        <title>Genome-wide comparative in silico analysis of the RNA helicase gene family in Zea mays and Glycine max: a comparison with Arabidopsis and Oryza sativa.</title>
        <authorList>
            <person name="Xu R."/>
            <person name="Zhang S."/>
            <person name="Huang J."/>
            <person name="Zheng C."/>
        </authorList>
    </citation>
    <scope>GENE FAMILY</scope>
</reference>
<keyword id="KW-0067">ATP-binding</keyword>
<keyword id="KW-0347">Helicase</keyword>
<keyword id="KW-0378">Hydrolase</keyword>
<keyword id="KW-0547">Nucleotide-binding</keyword>
<keyword id="KW-0597">Phosphoprotein</keyword>
<keyword id="KW-1185">Reference proteome</keyword>
<keyword id="KW-0694">RNA-binding</keyword>
<sequence>MNSDGPKSGKKRREIRAKLVKKLTSDEDGSGKLVKDNNKSLKRGREGKSDVDEPLIKKPASTTPLVTQIAKTSDSYLSKTRFDQFPLSPLTLKGIEDAGFKTMTVVQEATLPLILQGKDILAKAKTGTGKTVAFLLPSIEAVIKAPPASRDNRHPPIIVLVVCPTRELACQAAAEANILLKYHPSIGVQVVIGGTKLPTEQRRLQKSPCQILVATPGRLKDHIDNTSGFATRLMGVKVLVLDEADHLLDMGFRREIERIIAAVPKQRQTFLFSATVSDEVRQICHVALKRDHEFVNCVQEGAGETHQKVSQMYMIASLDRHFSLLYGLLKKHITDNVGYKVIIFCTTAMVTRLVADLLGKLSLNVREIHSRKPQSYRTRVSDEFRKSKSIILVTSDVSARGVDYPDVSLVVQMGLPSDREQYIHRLGRTGRKGKEGEGVLLLAPWEEYFLSSVKDLPITKSSLPPIDHEAVKKVQKGLIQVEMTNKEAAYQAWLGYYKSQKKIARDTTRLVELANEFSRSMGLSIPPAIPVNILGKMGLKNVPGIRVAPGFDKKPAKRNYRSR</sequence>
<protein>
    <recommendedName>
        <fullName>DEAD-box ATP-dependent RNA helicase 25</fullName>
        <ecNumber>3.6.4.13</ecNumber>
    </recommendedName>
</protein>
<name>RH25_ARATH</name>
<comment type="catalytic activity">
    <reaction>
        <text>ATP + H2O = ADP + phosphate + H(+)</text>
        <dbReference type="Rhea" id="RHEA:13065"/>
        <dbReference type="ChEBI" id="CHEBI:15377"/>
        <dbReference type="ChEBI" id="CHEBI:15378"/>
        <dbReference type="ChEBI" id="CHEBI:30616"/>
        <dbReference type="ChEBI" id="CHEBI:43474"/>
        <dbReference type="ChEBI" id="CHEBI:456216"/>
        <dbReference type="EC" id="3.6.4.13"/>
    </reaction>
</comment>
<comment type="domain">
    <text>The Q motif is unique to and characteristic of the DEAD box family of RNA helicases and controls ATP binding and hydrolysis.</text>
</comment>
<comment type="similarity">
    <text evidence="5">Belongs to the DEAD box helicase family.</text>
</comment>
<accession>Q94C75</accession>
<accession>Q9ZS00</accession>